<accession>Q5M876</accession>
<protein>
    <recommendedName>
        <fullName>N-acyl-aromatic-L-amino acid amidohydrolase (carboxylate-forming)</fullName>
        <ecNumber>3.5.1.114</ecNumber>
    </recommendedName>
    <alternativeName>
        <fullName>Aminoacylase-3</fullName>
        <shortName>ACY-3</shortName>
    </alternativeName>
    <alternativeName>
        <fullName>Aspartoacylase-2</fullName>
    </alternativeName>
</protein>
<feature type="chain" id="PRO_0000363362" description="N-acyl-aromatic-L-amino acid amidohydrolase (carboxylate-forming)">
    <location>
        <begin position="1"/>
        <end position="319"/>
    </location>
</feature>
<feature type="region of interest" description="Hydrolytic domain" evidence="1">
    <location>
        <begin position="1"/>
        <end position="210"/>
    </location>
</feature>
<feature type="region of interest" description="Shielding domain" evidence="1">
    <location>
        <begin position="211"/>
        <end position="318"/>
    </location>
</feature>
<feature type="binding site" evidence="1">
    <location>
        <position position="21"/>
    </location>
    <ligand>
        <name>Zn(2+)</name>
        <dbReference type="ChEBI" id="CHEBI:29105"/>
    </ligand>
</feature>
<feature type="binding site" evidence="1">
    <location>
        <position position="24"/>
    </location>
    <ligand>
        <name>Zn(2+)</name>
        <dbReference type="ChEBI" id="CHEBI:29105"/>
    </ligand>
</feature>
<feature type="binding site" evidence="1">
    <location>
        <position position="63"/>
    </location>
    <ligand>
        <name>substrate</name>
    </ligand>
</feature>
<feature type="binding site" evidence="1">
    <location>
        <begin position="70"/>
        <end position="71"/>
    </location>
    <ligand>
        <name>substrate</name>
    </ligand>
</feature>
<feature type="binding site" evidence="1">
    <location>
        <position position="116"/>
    </location>
    <ligand>
        <name>Zn(2+)</name>
        <dbReference type="ChEBI" id="CHEBI:29105"/>
    </ligand>
</feature>
<feature type="binding site" evidence="1">
    <location>
        <position position="178"/>
    </location>
    <ligand>
        <name>substrate</name>
    </ligand>
</feature>
<feature type="binding site" evidence="1">
    <location>
        <position position="288"/>
    </location>
    <ligand>
        <name>substrate</name>
    </ligand>
</feature>
<feature type="modified residue" description="Phosphothreonine" evidence="3">
    <location>
        <position position="318"/>
    </location>
</feature>
<sequence length="319" mass="35419">MCSLPGSRKPLLRVAVTGGTHGNEMCGVYLARYWLQNPGELQRPSFSAMPVLANPAATAACRRYIDRDLNRTFTLTFLGSTATPDDPYEVKRAQELNQLLGPKGTCQAFDFILDLHNTTANTGACLISEVSQNPFNLHLCHYLQLQNPGLPCRLFQFEPPGTESYSMDSVSKNGISLELGPQPQGVLRAELFSQMRAMVASILDFIELFNQGMEFPAFEMEVYKNLGSVDFPRTTDGHLTGTVHSRLQDHDFEPLRPGEPIFKLFSGEDVLYEGDSVVYPLFVNEAAYYEKRVAFLKSEKIRISVPALPGLTPSSTQTP</sequence>
<evidence type="ECO:0000250" key="1"/>
<evidence type="ECO:0000305" key="2"/>
<evidence type="ECO:0007744" key="3">
    <source>
    </source>
</evidence>
<comment type="function">
    <text evidence="1">Plays an important role in deacetylating mercapturic acids in kidney proximal tubules. Also acts on N-acetyl-aromatic amino acids (By similarity).</text>
</comment>
<comment type="catalytic activity">
    <reaction>
        <text>an N-acyl-aromatic L-alpha-amino acid + H2O = an aromatic L-alpha-amino acid + a carboxylate</text>
        <dbReference type="Rhea" id="RHEA:54184"/>
        <dbReference type="ChEBI" id="CHEBI:15377"/>
        <dbReference type="ChEBI" id="CHEBI:29067"/>
        <dbReference type="ChEBI" id="CHEBI:84824"/>
        <dbReference type="ChEBI" id="CHEBI:138093"/>
        <dbReference type="EC" id="3.5.1.114"/>
    </reaction>
</comment>
<comment type="catalytic activity">
    <reaction>
        <text>an N-acetyl-L-cysteine-S-conjugate + H2O = an S-substituted L-cysteine + acetate</text>
        <dbReference type="Rhea" id="RHEA:36855"/>
        <dbReference type="ChEBI" id="CHEBI:15377"/>
        <dbReference type="ChEBI" id="CHEBI:30089"/>
        <dbReference type="ChEBI" id="CHEBI:58717"/>
        <dbReference type="ChEBI" id="CHEBI:58718"/>
        <dbReference type="EC" id="3.5.1.114"/>
    </reaction>
</comment>
<comment type="cofactor">
    <cofactor evidence="1">
        <name>Zn(2+)</name>
        <dbReference type="ChEBI" id="CHEBI:29105"/>
    </cofactor>
    <text evidence="1">Binds 1 zinc ion per subunit.</text>
</comment>
<comment type="subunit">
    <text evidence="1">Exists as a mixture of homodimers and homotetramer, both catalytically active.</text>
</comment>
<comment type="subcellular location">
    <subcellularLocation>
        <location>Apical cell membrane</location>
        <topology>Peripheral membrane protein</topology>
    </subcellularLocation>
    <subcellularLocation>
        <location>Cytoplasm</location>
    </subcellularLocation>
    <text evidence="1">Predominantly localized in the apical membrane of cells in the S1 segment. In the proximal straight tubules (S2 and S3 segments) is expressed diffusely throughout the cytoplasm (By similarity).</text>
</comment>
<comment type="similarity">
    <text evidence="2">Belongs to the AspA/AstE family. Aspartoacylase subfamily.</text>
</comment>
<proteinExistence type="evidence at protein level"/>
<gene>
    <name type="primary">Acy3</name>
</gene>
<organism>
    <name type="scientific">Rattus norvegicus</name>
    <name type="common">Rat</name>
    <dbReference type="NCBI Taxonomy" id="10116"/>
    <lineage>
        <taxon>Eukaryota</taxon>
        <taxon>Metazoa</taxon>
        <taxon>Chordata</taxon>
        <taxon>Craniata</taxon>
        <taxon>Vertebrata</taxon>
        <taxon>Euteleostomi</taxon>
        <taxon>Mammalia</taxon>
        <taxon>Eutheria</taxon>
        <taxon>Euarchontoglires</taxon>
        <taxon>Glires</taxon>
        <taxon>Rodentia</taxon>
        <taxon>Myomorpha</taxon>
        <taxon>Muroidea</taxon>
        <taxon>Muridae</taxon>
        <taxon>Murinae</taxon>
        <taxon>Rattus</taxon>
    </lineage>
</organism>
<reference key="1">
    <citation type="journal article" date="2004" name="Genome Res.">
        <title>The status, quality, and expansion of the NIH full-length cDNA project: the Mammalian Gene Collection (MGC).</title>
        <authorList>
            <consortium name="The MGC Project Team"/>
        </authorList>
    </citation>
    <scope>NUCLEOTIDE SEQUENCE [LARGE SCALE MRNA]</scope>
    <source>
        <tissue>Liver</tissue>
    </source>
</reference>
<reference key="2">
    <citation type="journal article" date="2012" name="Nat. Commun.">
        <title>Quantitative maps of protein phosphorylation sites across 14 different rat organs and tissues.</title>
        <authorList>
            <person name="Lundby A."/>
            <person name="Secher A."/>
            <person name="Lage K."/>
            <person name="Nordsborg N.B."/>
            <person name="Dmytriyev A."/>
            <person name="Lundby C."/>
            <person name="Olsen J.V."/>
        </authorList>
    </citation>
    <scope>PHOSPHORYLATION [LARGE SCALE ANALYSIS] AT THR-318</scope>
    <scope>IDENTIFICATION BY MASS SPECTROMETRY [LARGE SCALE ANALYSIS]</scope>
</reference>
<keyword id="KW-1003">Cell membrane</keyword>
<keyword id="KW-0963">Cytoplasm</keyword>
<keyword id="KW-0378">Hydrolase</keyword>
<keyword id="KW-0472">Membrane</keyword>
<keyword id="KW-0479">Metal-binding</keyword>
<keyword id="KW-0597">Phosphoprotein</keyword>
<keyword id="KW-1185">Reference proteome</keyword>
<keyword id="KW-0862">Zinc</keyword>
<name>ACY3_RAT</name>
<dbReference type="EC" id="3.5.1.114"/>
<dbReference type="EMBL" id="BC088190">
    <property type="protein sequence ID" value="AAH88190.1"/>
    <property type="molecule type" value="mRNA"/>
</dbReference>
<dbReference type="RefSeq" id="NP_001009603.1">
    <property type="nucleotide sequence ID" value="NM_001009603.1"/>
</dbReference>
<dbReference type="RefSeq" id="XP_006230795.1">
    <property type="nucleotide sequence ID" value="XM_006230733.3"/>
</dbReference>
<dbReference type="RefSeq" id="XP_008758320.1">
    <property type="nucleotide sequence ID" value="XM_008760098.2"/>
</dbReference>
<dbReference type="RefSeq" id="XP_063142839.1">
    <property type="nucleotide sequence ID" value="XM_063286769.1"/>
</dbReference>
<dbReference type="RefSeq" id="XP_063142846.1">
    <property type="nucleotide sequence ID" value="XM_063286776.1"/>
</dbReference>
<dbReference type="SMR" id="Q5M876"/>
<dbReference type="FunCoup" id="Q5M876">
    <property type="interactions" value="42"/>
</dbReference>
<dbReference type="STRING" id="10116.ENSRNOP00000024112"/>
<dbReference type="GlyGen" id="Q5M876">
    <property type="glycosylation" value="1 site"/>
</dbReference>
<dbReference type="iPTMnet" id="Q5M876"/>
<dbReference type="PhosphoSitePlus" id="Q5M876"/>
<dbReference type="PaxDb" id="10116-ENSRNOP00000024112"/>
<dbReference type="Ensembl" id="ENSRNOT00000024112.7">
    <property type="protein sequence ID" value="ENSRNOP00000024112.4"/>
    <property type="gene ID" value="ENSRNOG00000017901.7"/>
</dbReference>
<dbReference type="GeneID" id="293653"/>
<dbReference type="KEGG" id="rno:293653"/>
<dbReference type="UCSC" id="RGD:1305394">
    <property type="organism name" value="rat"/>
</dbReference>
<dbReference type="AGR" id="RGD:1305394"/>
<dbReference type="CTD" id="91703"/>
<dbReference type="RGD" id="1305394">
    <property type="gene designation" value="Acy3"/>
</dbReference>
<dbReference type="eggNOG" id="ENOG502QRAK">
    <property type="taxonomic scope" value="Eukaryota"/>
</dbReference>
<dbReference type="GeneTree" id="ENSGT00390000001189"/>
<dbReference type="HOGENOM" id="CLU_083292_0_0_1"/>
<dbReference type="InParanoid" id="Q5M876"/>
<dbReference type="OMA" id="YPRDPTT"/>
<dbReference type="OrthoDB" id="8300214at2759"/>
<dbReference type="PhylomeDB" id="Q5M876"/>
<dbReference type="TreeFam" id="TF328708"/>
<dbReference type="BRENDA" id="3.5.1.114">
    <property type="organism ID" value="5301"/>
</dbReference>
<dbReference type="Reactome" id="R-RNO-5423646">
    <property type="pathway name" value="Aflatoxin activation and detoxification"/>
</dbReference>
<dbReference type="PRO" id="PR:Q5M876"/>
<dbReference type="Proteomes" id="UP000002494">
    <property type="component" value="Chromosome 1"/>
</dbReference>
<dbReference type="Bgee" id="ENSRNOG00000017901">
    <property type="expression patterns" value="Expressed in adult mammalian kidney and 18 other cell types or tissues"/>
</dbReference>
<dbReference type="GO" id="GO:0016324">
    <property type="term" value="C:apical plasma membrane"/>
    <property type="evidence" value="ECO:0000266"/>
    <property type="project" value="RGD"/>
</dbReference>
<dbReference type="GO" id="GO:0005737">
    <property type="term" value="C:cytoplasm"/>
    <property type="evidence" value="ECO:0000266"/>
    <property type="project" value="RGD"/>
</dbReference>
<dbReference type="GO" id="GO:0005829">
    <property type="term" value="C:cytosol"/>
    <property type="evidence" value="ECO:0000318"/>
    <property type="project" value="GO_Central"/>
</dbReference>
<dbReference type="GO" id="GO:0016020">
    <property type="term" value="C:membrane"/>
    <property type="evidence" value="ECO:0000266"/>
    <property type="project" value="RGD"/>
</dbReference>
<dbReference type="GO" id="GO:0004046">
    <property type="term" value="F:aminoacylase activity"/>
    <property type="evidence" value="ECO:0000266"/>
    <property type="project" value="RGD"/>
</dbReference>
<dbReference type="GO" id="GO:0016788">
    <property type="term" value="F:hydrolase activity, acting on ester bonds"/>
    <property type="evidence" value="ECO:0007669"/>
    <property type="project" value="InterPro"/>
</dbReference>
<dbReference type="GO" id="GO:0042802">
    <property type="term" value="F:identical protein binding"/>
    <property type="evidence" value="ECO:0000266"/>
    <property type="project" value="RGD"/>
</dbReference>
<dbReference type="GO" id="GO:0046872">
    <property type="term" value="F:metal ion binding"/>
    <property type="evidence" value="ECO:0007669"/>
    <property type="project" value="UniProtKB-KW"/>
</dbReference>
<dbReference type="CDD" id="cd06909">
    <property type="entry name" value="M14_ASPA"/>
    <property type="match status" value="1"/>
</dbReference>
<dbReference type="FunFam" id="3.40.630.10:FF:000025">
    <property type="entry name" value="aspartoacylase"/>
    <property type="match status" value="1"/>
</dbReference>
<dbReference type="Gene3D" id="2.20.25.160">
    <property type="match status" value="1"/>
</dbReference>
<dbReference type="Gene3D" id="3.40.630.10">
    <property type="entry name" value="Zn peptidases"/>
    <property type="match status" value="1"/>
</dbReference>
<dbReference type="HAMAP" id="MF_00704">
    <property type="entry name" value="Aspartoacylase"/>
    <property type="match status" value="1"/>
</dbReference>
<dbReference type="InterPro" id="IPR050178">
    <property type="entry name" value="AspA/AstE_fam"/>
</dbReference>
<dbReference type="InterPro" id="IPR016708">
    <property type="entry name" value="Aspartoacylase"/>
</dbReference>
<dbReference type="InterPro" id="IPR055438">
    <property type="entry name" value="AstE_AspA_cat"/>
</dbReference>
<dbReference type="InterPro" id="IPR007036">
    <property type="entry name" value="Aste_AspA_hybrid_dom"/>
</dbReference>
<dbReference type="NCBIfam" id="NF002601">
    <property type="entry name" value="PRK02259.1"/>
    <property type="match status" value="1"/>
</dbReference>
<dbReference type="PANTHER" id="PTHR15162">
    <property type="entry name" value="ASPARTOACYLASE"/>
    <property type="match status" value="1"/>
</dbReference>
<dbReference type="PANTHER" id="PTHR15162:SF5">
    <property type="entry name" value="N-ACYL-AROMATIC-L-AMINO ACID AMIDOHYDROLASE (CARBOXYLATE-FORMING)"/>
    <property type="match status" value="1"/>
</dbReference>
<dbReference type="Pfam" id="PF24827">
    <property type="entry name" value="AstE_AspA_cat"/>
    <property type="match status" value="1"/>
</dbReference>
<dbReference type="Pfam" id="PF04952">
    <property type="entry name" value="AstE_AspA_hybrid"/>
    <property type="match status" value="1"/>
</dbReference>
<dbReference type="PIRSF" id="PIRSF018001">
    <property type="entry name" value="Aspartoacylase"/>
    <property type="match status" value="1"/>
</dbReference>
<dbReference type="SUPFAM" id="SSF53187">
    <property type="entry name" value="Zn-dependent exopeptidases"/>
    <property type="match status" value="1"/>
</dbReference>